<accession>A4WQ33</accession>
<keyword id="KW-0131">Cell cycle</keyword>
<keyword id="KW-0132">Cell division</keyword>
<keyword id="KW-0133">Cell shape</keyword>
<keyword id="KW-0961">Cell wall biogenesis/degradation</keyword>
<keyword id="KW-0963">Cytoplasm</keyword>
<keyword id="KW-0573">Peptidoglycan synthesis</keyword>
<keyword id="KW-0670">Pyruvate</keyword>
<keyword id="KW-0808">Transferase</keyword>
<feature type="chain" id="PRO_1000023089" description="UDP-N-acetylglucosamine 1-carboxyvinyltransferase">
    <location>
        <begin position="1"/>
        <end position="422"/>
    </location>
</feature>
<feature type="active site" description="Proton donor" evidence="1">
    <location>
        <position position="118"/>
    </location>
</feature>
<feature type="binding site" evidence="1">
    <location>
        <begin position="22"/>
        <end position="23"/>
    </location>
    <ligand>
        <name>phosphoenolpyruvate</name>
        <dbReference type="ChEBI" id="CHEBI:58702"/>
    </ligand>
</feature>
<feature type="binding site" evidence="1">
    <location>
        <position position="94"/>
    </location>
    <ligand>
        <name>UDP-N-acetyl-alpha-D-glucosamine</name>
        <dbReference type="ChEBI" id="CHEBI:57705"/>
    </ligand>
</feature>
<feature type="binding site" evidence="1">
    <location>
        <begin position="123"/>
        <end position="127"/>
    </location>
    <ligand>
        <name>UDP-N-acetyl-alpha-D-glucosamine</name>
        <dbReference type="ChEBI" id="CHEBI:57705"/>
    </ligand>
</feature>
<feature type="binding site" evidence="1">
    <location>
        <position position="309"/>
    </location>
    <ligand>
        <name>UDP-N-acetyl-alpha-D-glucosamine</name>
        <dbReference type="ChEBI" id="CHEBI:57705"/>
    </ligand>
</feature>
<feature type="binding site" evidence="1">
    <location>
        <position position="331"/>
    </location>
    <ligand>
        <name>UDP-N-acetyl-alpha-D-glucosamine</name>
        <dbReference type="ChEBI" id="CHEBI:57705"/>
    </ligand>
</feature>
<feature type="modified residue" description="2-(S-cysteinyl)pyruvic acid O-phosphothioketal" evidence="1">
    <location>
        <position position="118"/>
    </location>
</feature>
<dbReference type="EC" id="2.5.1.7" evidence="1"/>
<dbReference type="EMBL" id="CP000661">
    <property type="protein sequence ID" value="ABP69497.1"/>
    <property type="molecule type" value="Genomic_DNA"/>
</dbReference>
<dbReference type="SMR" id="A4WQ33"/>
<dbReference type="STRING" id="349102.Rsph17025_0591"/>
<dbReference type="KEGG" id="rsq:Rsph17025_0591"/>
<dbReference type="eggNOG" id="COG0766">
    <property type="taxonomic scope" value="Bacteria"/>
</dbReference>
<dbReference type="HOGENOM" id="CLU_027387_0_0_5"/>
<dbReference type="BioCyc" id="RSPH349102:G1G8M-609-MONOMER"/>
<dbReference type="UniPathway" id="UPA00219"/>
<dbReference type="GO" id="GO:0005737">
    <property type="term" value="C:cytoplasm"/>
    <property type="evidence" value="ECO:0007669"/>
    <property type="project" value="UniProtKB-SubCell"/>
</dbReference>
<dbReference type="GO" id="GO:0008760">
    <property type="term" value="F:UDP-N-acetylglucosamine 1-carboxyvinyltransferase activity"/>
    <property type="evidence" value="ECO:0007669"/>
    <property type="project" value="UniProtKB-UniRule"/>
</dbReference>
<dbReference type="GO" id="GO:0051301">
    <property type="term" value="P:cell division"/>
    <property type="evidence" value="ECO:0007669"/>
    <property type="project" value="UniProtKB-KW"/>
</dbReference>
<dbReference type="GO" id="GO:0071555">
    <property type="term" value="P:cell wall organization"/>
    <property type="evidence" value="ECO:0007669"/>
    <property type="project" value="UniProtKB-KW"/>
</dbReference>
<dbReference type="GO" id="GO:0009252">
    <property type="term" value="P:peptidoglycan biosynthetic process"/>
    <property type="evidence" value="ECO:0007669"/>
    <property type="project" value="UniProtKB-UniRule"/>
</dbReference>
<dbReference type="GO" id="GO:0008360">
    <property type="term" value="P:regulation of cell shape"/>
    <property type="evidence" value="ECO:0007669"/>
    <property type="project" value="UniProtKB-KW"/>
</dbReference>
<dbReference type="GO" id="GO:0019277">
    <property type="term" value="P:UDP-N-acetylgalactosamine biosynthetic process"/>
    <property type="evidence" value="ECO:0007669"/>
    <property type="project" value="InterPro"/>
</dbReference>
<dbReference type="CDD" id="cd01555">
    <property type="entry name" value="UdpNAET"/>
    <property type="match status" value="1"/>
</dbReference>
<dbReference type="FunFam" id="3.65.10.10:FF:000001">
    <property type="entry name" value="UDP-N-acetylglucosamine 1-carboxyvinyltransferase"/>
    <property type="match status" value="1"/>
</dbReference>
<dbReference type="Gene3D" id="3.65.10.10">
    <property type="entry name" value="Enolpyruvate transferase domain"/>
    <property type="match status" value="2"/>
</dbReference>
<dbReference type="HAMAP" id="MF_00111">
    <property type="entry name" value="MurA"/>
    <property type="match status" value="1"/>
</dbReference>
<dbReference type="InterPro" id="IPR001986">
    <property type="entry name" value="Enolpyruvate_Tfrase_dom"/>
</dbReference>
<dbReference type="InterPro" id="IPR036968">
    <property type="entry name" value="Enolpyruvate_Tfrase_sf"/>
</dbReference>
<dbReference type="InterPro" id="IPR050068">
    <property type="entry name" value="MurA_subfamily"/>
</dbReference>
<dbReference type="InterPro" id="IPR013792">
    <property type="entry name" value="RNA3'P_cycl/enolpyr_Trfase_a/b"/>
</dbReference>
<dbReference type="InterPro" id="IPR005750">
    <property type="entry name" value="UDP_GlcNAc_COvinyl_MurA"/>
</dbReference>
<dbReference type="NCBIfam" id="TIGR01072">
    <property type="entry name" value="murA"/>
    <property type="match status" value="1"/>
</dbReference>
<dbReference type="NCBIfam" id="NF006873">
    <property type="entry name" value="PRK09369.1"/>
    <property type="match status" value="1"/>
</dbReference>
<dbReference type="PANTHER" id="PTHR43783">
    <property type="entry name" value="UDP-N-ACETYLGLUCOSAMINE 1-CARBOXYVINYLTRANSFERASE"/>
    <property type="match status" value="1"/>
</dbReference>
<dbReference type="PANTHER" id="PTHR43783:SF1">
    <property type="entry name" value="UDP-N-ACETYLGLUCOSAMINE 1-CARBOXYVINYLTRANSFERASE"/>
    <property type="match status" value="1"/>
</dbReference>
<dbReference type="Pfam" id="PF00275">
    <property type="entry name" value="EPSP_synthase"/>
    <property type="match status" value="1"/>
</dbReference>
<dbReference type="SUPFAM" id="SSF55205">
    <property type="entry name" value="EPT/RTPC-like"/>
    <property type="match status" value="1"/>
</dbReference>
<protein>
    <recommendedName>
        <fullName evidence="1">UDP-N-acetylglucosamine 1-carboxyvinyltransferase</fullName>
        <ecNumber evidence="1">2.5.1.7</ecNumber>
    </recommendedName>
    <alternativeName>
        <fullName evidence="1">Enoylpyruvate transferase</fullName>
    </alternativeName>
    <alternativeName>
        <fullName evidence="1">UDP-N-acetylglucosamine enolpyruvyl transferase</fullName>
        <shortName evidence="1">EPT</shortName>
    </alternativeName>
</protein>
<name>MURA_CERS5</name>
<organism>
    <name type="scientific">Cereibacter sphaeroides (strain ATCC 17025 / ATH 2.4.3)</name>
    <name type="common">Rhodobacter sphaeroides</name>
    <dbReference type="NCBI Taxonomy" id="349102"/>
    <lineage>
        <taxon>Bacteria</taxon>
        <taxon>Pseudomonadati</taxon>
        <taxon>Pseudomonadota</taxon>
        <taxon>Alphaproteobacteria</taxon>
        <taxon>Rhodobacterales</taxon>
        <taxon>Paracoccaceae</taxon>
        <taxon>Cereibacter</taxon>
    </lineage>
</organism>
<comment type="function">
    <text evidence="1">Cell wall formation. Adds enolpyruvyl to UDP-N-acetylglucosamine.</text>
</comment>
<comment type="catalytic activity">
    <reaction evidence="1">
        <text>phosphoenolpyruvate + UDP-N-acetyl-alpha-D-glucosamine = UDP-N-acetyl-3-O-(1-carboxyvinyl)-alpha-D-glucosamine + phosphate</text>
        <dbReference type="Rhea" id="RHEA:18681"/>
        <dbReference type="ChEBI" id="CHEBI:43474"/>
        <dbReference type="ChEBI" id="CHEBI:57705"/>
        <dbReference type="ChEBI" id="CHEBI:58702"/>
        <dbReference type="ChEBI" id="CHEBI:68483"/>
        <dbReference type="EC" id="2.5.1.7"/>
    </reaction>
</comment>
<comment type="pathway">
    <text evidence="1">Cell wall biogenesis; peptidoglycan biosynthesis.</text>
</comment>
<comment type="subcellular location">
    <subcellularLocation>
        <location evidence="1">Cytoplasm</location>
    </subcellularLocation>
</comment>
<comment type="similarity">
    <text evidence="1">Belongs to the EPSP synthase family. MurA subfamily.</text>
</comment>
<evidence type="ECO:0000255" key="1">
    <source>
        <dbReference type="HAMAP-Rule" id="MF_00111"/>
    </source>
</evidence>
<proteinExistence type="inferred from homology"/>
<gene>
    <name evidence="1" type="primary">murA</name>
    <name type="ordered locus">Rsph17025_0591</name>
</gene>
<reference key="1">
    <citation type="submission" date="2007-04" db="EMBL/GenBank/DDBJ databases">
        <title>Complete sequence of chromosome of Rhodobacter sphaeroides ATCC 17025.</title>
        <authorList>
            <consortium name="US DOE Joint Genome Institute"/>
            <person name="Copeland A."/>
            <person name="Lucas S."/>
            <person name="Lapidus A."/>
            <person name="Barry K."/>
            <person name="Detter J.C."/>
            <person name="Glavina del Rio T."/>
            <person name="Hammon N."/>
            <person name="Israni S."/>
            <person name="Dalin E."/>
            <person name="Tice H."/>
            <person name="Pitluck S."/>
            <person name="Chertkov O."/>
            <person name="Brettin T."/>
            <person name="Bruce D."/>
            <person name="Han C."/>
            <person name="Schmutz J."/>
            <person name="Larimer F."/>
            <person name="Land M."/>
            <person name="Hauser L."/>
            <person name="Kyrpides N."/>
            <person name="Kim E."/>
            <person name="Richardson P."/>
            <person name="Mackenzie C."/>
            <person name="Choudhary M."/>
            <person name="Donohue T.J."/>
            <person name="Kaplan S."/>
        </authorList>
    </citation>
    <scope>NUCLEOTIDE SEQUENCE [LARGE SCALE GENOMIC DNA]</scope>
    <source>
        <strain>ATCC 17025 / ATH 2.4.3</strain>
    </source>
</reference>
<sequence>MDSILVKGNGELRGQIPIAGAKNACLALMPATLLSDEPLTLTNAPRLSDIRTMTQLLQSLGAEVASLQGGQVLALSSHALTDHRADYDIVRKMRASILVLGPMLARDGHAVVSLPGGCAIGARPVDLHLKALEAMGADLDLRDGYIHAKAPAGGLRGARVAFPIVSVGATENALMAATLAKGTTVLENAAREPEIVDLARCLRRMGAQIEGEGSATITVQGVDRLGGATHPVVTDRIELGTYMLAPAICGGEVELLGGRIELVGAFCEKLDAAGISVEETERGLRVARRNGRVKAVDVTTEPFPGFPTDLQAQMMALLCTAEGTSVLEEKIFENRFMHAPELTRMGARIEVHGGTARVTGVEKLRGAPVMATDLRASVSLILAGLAAEGETVVSRVYHLDRGYERVEEKLSACGAQIRRIPG</sequence>